<sequence>MTLILGIDPGSRITGFGVVRETARGCEYVASGCIRTGNGPLHERLHVVFRSVREVIRTHGPTALSIEQVFMARNADSALKLGQARGAAIVAAMEEGLSVAEYTASQVKQAVVGTGGADKQQVQMMVMHLLKLTQKPQIDASDALAIALCHAHTQQSLVPHGLVGARRRGGRLRL</sequence>
<protein>
    <recommendedName>
        <fullName evidence="2">Crossover junction endodeoxyribonuclease RuvC</fullName>
        <ecNumber evidence="2 3">3.1.21.10</ecNumber>
    </recommendedName>
    <alternativeName>
        <fullName evidence="2">Holliday junction nuclease RuvC</fullName>
    </alternativeName>
    <alternativeName>
        <fullName evidence="2 5">Holliday junction resolvase RuvC</fullName>
    </alternativeName>
</protein>
<keyword id="KW-0002">3D-structure</keyword>
<keyword id="KW-0963">Cytoplasm</keyword>
<keyword id="KW-0227">DNA damage</keyword>
<keyword id="KW-0233">DNA recombination</keyword>
<keyword id="KW-0234">DNA repair</keyword>
<keyword id="KW-0238">DNA-binding</keyword>
<keyword id="KW-0255">Endonuclease</keyword>
<keyword id="KW-0378">Hydrolase</keyword>
<keyword id="KW-0460">Magnesium</keyword>
<keyword id="KW-0479">Metal-binding</keyword>
<keyword id="KW-0540">Nuclease</keyword>
<keyword id="KW-1185">Reference proteome</keyword>
<gene>
    <name evidence="2 6" type="primary">ruvC</name>
    <name type="ordered locus">PA0965</name>
</gene>
<evidence type="ECO:0000250" key="1"/>
<evidence type="ECO:0000255" key="2">
    <source>
        <dbReference type="HAMAP-Rule" id="MF_00034"/>
    </source>
</evidence>
<evidence type="ECO:0000269" key="3">
    <source>
    </source>
</evidence>
<evidence type="ECO:0000269" key="4">
    <source>
    </source>
</evidence>
<evidence type="ECO:0000303" key="5">
    <source>
    </source>
</evidence>
<evidence type="ECO:0000303" key="6">
    <source>
    </source>
</evidence>
<evidence type="ECO:0000305" key="7"/>
<evidence type="ECO:0000305" key="8">
    <source>
    </source>
</evidence>
<evidence type="ECO:0000312" key="9">
    <source>
        <dbReference type="PDB" id="6LW3"/>
    </source>
</evidence>
<evidence type="ECO:0007829" key="10">
    <source>
        <dbReference type="PDB" id="6LW3"/>
    </source>
</evidence>
<name>RUVC_PSEAE</name>
<proteinExistence type="evidence at protein level"/>
<organism>
    <name type="scientific">Pseudomonas aeruginosa (strain ATCC 15692 / DSM 22644 / CIP 104116 / JCM 14847 / LMG 12228 / 1C / PRS 101 / PAO1)</name>
    <dbReference type="NCBI Taxonomy" id="208964"/>
    <lineage>
        <taxon>Bacteria</taxon>
        <taxon>Pseudomonadati</taxon>
        <taxon>Pseudomonadota</taxon>
        <taxon>Gammaproteobacteria</taxon>
        <taxon>Pseudomonadales</taxon>
        <taxon>Pseudomonadaceae</taxon>
        <taxon>Pseudomonas</taxon>
    </lineage>
</organism>
<dbReference type="EC" id="3.1.21.10" evidence="2 3"/>
<dbReference type="EMBL" id="D83138">
    <property type="protein sequence ID" value="BAA11817.1"/>
    <property type="molecule type" value="Genomic_DNA"/>
</dbReference>
<dbReference type="EMBL" id="AE004091">
    <property type="protein sequence ID" value="AAG04354.1"/>
    <property type="molecule type" value="Genomic_DNA"/>
</dbReference>
<dbReference type="PIR" id="JC5478">
    <property type="entry name" value="JC5478"/>
</dbReference>
<dbReference type="RefSeq" id="NP_249656.1">
    <property type="nucleotide sequence ID" value="NC_002516.2"/>
</dbReference>
<dbReference type="RefSeq" id="WP_003112575.1">
    <property type="nucleotide sequence ID" value="NZ_QZGE01000007.1"/>
</dbReference>
<dbReference type="PDB" id="6LW3">
    <property type="method" value="X-ray"/>
    <property type="resolution" value="2.38 A"/>
    <property type="chains" value="A/B=1-153"/>
</dbReference>
<dbReference type="PDBsum" id="6LW3"/>
<dbReference type="SMR" id="Q51424"/>
<dbReference type="FunCoup" id="Q51424">
    <property type="interactions" value="280"/>
</dbReference>
<dbReference type="STRING" id="208964.PA0965"/>
<dbReference type="PaxDb" id="208964-PA0965"/>
<dbReference type="GeneID" id="882131"/>
<dbReference type="KEGG" id="pae:PA0965"/>
<dbReference type="PATRIC" id="fig|208964.12.peg.1003"/>
<dbReference type="PseudoCAP" id="PA0965"/>
<dbReference type="HOGENOM" id="CLU_091257_2_1_6"/>
<dbReference type="InParanoid" id="Q51424"/>
<dbReference type="OrthoDB" id="9805499at2"/>
<dbReference type="PhylomeDB" id="Q51424"/>
<dbReference type="BioCyc" id="PAER208964:G1FZ6-986-MONOMER"/>
<dbReference type="Proteomes" id="UP000002438">
    <property type="component" value="Chromosome"/>
</dbReference>
<dbReference type="GO" id="GO:0005737">
    <property type="term" value="C:cytoplasm"/>
    <property type="evidence" value="ECO:0007669"/>
    <property type="project" value="UniProtKB-SubCell"/>
</dbReference>
<dbReference type="GO" id="GO:0048476">
    <property type="term" value="C:Holliday junction resolvase complex"/>
    <property type="evidence" value="ECO:0007669"/>
    <property type="project" value="UniProtKB-UniRule"/>
</dbReference>
<dbReference type="GO" id="GO:0008821">
    <property type="term" value="F:crossover junction DNA endonuclease activity"/>
    <property type="evidence" value="ECO:0007669"/>
    <property type="project" value="UniProtKB-UniRule"/>
</dbReference>
<dbReference type="GO" id="GO:0003677">
    <property type="term" value="F:DNA binding"/>
    <property type="evidence" value="ECO:0007669"/>
    <property type="project" value="UniProtKB-KW"/>
</dbReference>
<dbReference type="GO" id="GO:0000287">
    <property type="term" value="F:magnesium ion binding"/>
    <property type="evidence" value="ECO:0007669"/>
    <property type="project" value="UniProtKB-UniRule"/>
</dbReference>
<dbReference type="GO" id="GO:0006310">
    <property type="term" value="P:DNA recombination"/>
    <property type="evidence" value="ECO:0007669"/>
    <property type="project" value="UniProtKB-UniRule"/>
</dbReference>
<dbReference type="GO" id="GO:0006281">
    <property type="term" value="P:DNA repair"/>
    <property type="evidence" value="ECO:0007669"/>
    <property type="project" value="UniProtKB-UniRule"/>
</dbReference>
<dbReference type="CDD" id="cd16962">
    <property type="entry name" value="RuvC"/>
    <property type="match status" value="1"/>
</dbReference>
<dbReference type="FunFam" id="3.30.420.10:FF:000002">
    <property type="entry name" value="Crossover junction endodeoxyribonuclease RuvC"/>
    <property type="match status" value="1"/>
</dbReference>
<dbReference type="Gene3D" id="3.30.420.10">
    <property type="entry name" value="Ribonuclease H-like superfamily/Ribonuclease H"/>
    <property type="match status" value="1"/>
</dbReference>
<dbReference type="HAMAP" id="MF_00034">
    <property type="entry name" value="RuvC"/>
    <property type="match status" value="1"/>
</dbReference>
<dbReference type="InterPro" id="IPR012337">
    <property type="entry name" value="RNaseH-like_sf"/>
</dbReference>
<dbReference type="InterPro" id="IPR036397">
    <property type="entry name" value="RNaseH_sf"/>
</dbReference>
<dbReference type="InterPro" id="IPR020563">
    <property type="entry name" value="X-over_junc_endoDNase_Mg_BS"/>
</dbReference>
<dbReference type="InterPro" id="IPR002176">
    <property type="entry name" value="X-over_junc_endoDNase_RuvC"/>
</dbReference>
<dbReference type="NCBIfam" id="TIGR00228">
    <property type="entry name" value="ruvC"/>
    <property type="match status" value="1"/>
</dbReference>
<dbReference type="PANTHER" id="PTHR30194">
    <property type="entry name" value="CROSSOVER JUNCTION ENDODEOXYRIBONUCLEASE RUVC"/>
    <property type="match status" value="1"/>
</dbReference>
<dbReference type="PANTHER" id="PTHR30194:SF3">
    <property type="entry name" value="CROSSOVER JUNCTION ENDODEOXYRIBONUCLEASE RUVC"/>
    <property type="match status" value="1"/>
</dbReference>
<dbReference type="Pfam" id="PF02075">
    <property type="entry name" value="RuvC"/>
    <property type="match status" value="1"/>
</dbReference>
<dbReference type="PRINTS" id="PR00696">
    <property type="entry name" value="RSOLVASERUVC"/>
</dbReference>
<dbReference type="SUPFAM" id="SSF53098">
    <property type="entry name" value="Ribonuclease H-like"/>
    <property type="match status" value="1"/>
</dbReference>
<dbReference type="PROSITE" id="PS01321">
    <property type="entry name" value="RUVC"/>
    <property type="match status" value="1"/>
</dbReference>
<feature type="chain" id="PRO_0000183121" description="Crossover junction endodeoxyribonuclease RuvC">
    <location>
        <begin position="1"/>
        <end position="174"/>
    </location>
</feature>
<feature type="active site" evidence="2 8">
    <location>
        <position position="8"/>
    </location>
</feature>
<feature type="active site" evidence="2 8">
    <location>
        <position position="67"/>
    </location>
</feature>
<feature type="active site" evidence="2 8">
    <location>
        <position position="139"/>
    </location>
</feature>
<feature type="active site" evidence="8">
    <location>
        <position position="142"/>
    </location>
</feature>
<feature type="binding site" evidence="2">
    <location>
        <position position="8"/>
    </location>
    <ligand>
        <name>Mg(2+)</name>
        <dbReference type="ChEBI" id="CHEBI:18420"/>
        <label>1</label>
    </ligand>
</feature>
<feature type="binding site" evidence="2">
    <location>
        <position position="67"/>
    </location>
    <ligand>
        <name>Mg(2+)</name>
        <dbReference type="ChEBI" id="CHEBI:18420"/>
        <label>2</label>
    </ligand>
</feature>
<feature type="binding site" evidence="2">
    <location>
        <position position="139"/>
    </location>
    <ligand>
        <name>Mg(2+)</name>
        <dbReference type="ChEBI" id="CHEBI:18420"/>
        <label>1</label>
    </ligand>
</feature>
<feature type="mutagenesis site" description="Does not cleave Holliday junction (HJ) DNA." evidence="3">
    <original>D</original>
    <variation>N</variation>
    <location>
        <position position="8"/>
    </location>
</feature>
<feature type="mutagenesis site" description="Does not cleave HJ DNA." evidence="3">
    <original>R</original>
    <variation>A</variation>
    <location>
        <position position="12"/>
    </location>
</feature>
<feature type="mutagenesis site" description="Nearly wild-type cleavage of HJ DNA." evidence="3">
    <original>R</original>
    <variation>A</variation>
    <location>
        <position position="35"/>
    </location>
</feature>
<feature type="mutagenesis site" description="Reduced cleavage of HJ DNA, reduced binding to HJ DNA." evidence="3">
    <original>R</original>
    <variation>A</variation>
    <location>
        <position position="44"/>
    </location>
</feature>
<feature type="mutagenesis site" description="Nearly wild-type cleavage of HJ DNA." evidence="3">
    <original>R</original>
    <variation>A</variation>
    <location>
        <position position="50"/>
    </location>
</feature>
<feature type="mutagenesis site" description="Does not cleave HJ DNA." evidence="3">
    <original>E</original>
    <variation>Q</variation>
    <location>
        <position position="67"/>
    </location>
</feature>
<feature type="mutagenesis site" description="Does not cleave HJ DNA, altered binding of HJ DNA." evidence="3">
    <original>F</original>
    <variation>A</variation>
    <location>
        <position position="70"/>
    </location>
</feature>
<feature type="mutagenesis site" description="Does not cleave HJ DNA, binds DNA." evidence="3">
    <original>R</original>
    <variation>A</variation>
    <location>
        <position position="73"/>
    </location>
</feature>
<feature type="mutagenesis site" description="Reduced cleavage of HJ DNA." evidence="3">
    <original>N</original>
    <variation>A</variation>
    <location>
        <position position="74"/>
    </location>
</feature>
<feature type="mutagenesis site" description="Does not cleave HJ DNA." evidence="3">
    <original>N</original>
    <variation>K</variation>
    <location>
        <position position="74"/>
    </location>
</feature>
<feature type="mutagenesis site" description="Does not cleave HJ DNA." evidence="3">
    <original>D</original>
    <variation>N</variation>
    <location>
        <position position="139"/>
    </location>
</feature>
<feature type="mutagenesis site" description="Does not cleave HJ DNA." evidence="3">
    <original>D</original>
    <variation>N</variation>
    <location>
        <position position="142"/>
    </location>
</feature>
<feature type="strand" evidence="10">
    <location>
        <begin position="3"/>
        <end position="8"/>
    </location>
</feature>
<feature type="strand" evidence="10">
    <location>
        <begin position="11"/>
        <end position="22"/>
    </location>
</feature>
<feature type="strand" evidence="10">
    <location>
        <begin position="25"/>
        <end position="35"/>
    </location>
</feature>
<feature type="helix" evidence="10">
    <location>
        <begin position="41"/>
        <end position="59"/>
    </location>
</feature>
<feature type="strand" evidence="10">
    <location>
        <begin position="63"/>
        <end position="67"/>
    </location>
</feature>
<feature type="helix" evidence="10">
    <location>
        <begin position="75"/>
        <end position="94"/>
    </location>
</feature>
<feature type="strand" evidence="10">
    <location>
        <begin position="98"/>
        <end position="102"/>
    </location>
</feature>
<feature type="helix" evidence="10">
    <location>
        <begin position="104"/>
        <end position="111"/>
    </location>
</feature>
<feature type="helix" evidence="10">
    <location>
        <begin position="119"/>
        <end position="129"/>
    </location>
</feature>
<feature type="helix" evidence="10">
    <location>
        <begin position="138"/>
        <end position="150"/>
    </location>
</feature>
<accession>Q51424</accession>
<reference key="1">
    <citation type="journal article" date="1996" name="Gene">
        <title>Molecular analysis of the Pseudomonas aeruginosa genes, ruvA, ruvB and ruvC, involved in processing of homologous recombination intermediates.</title>
        <authorList>
            <person name="Hishida T."/>
            <person name="Iwasaki H."/>
            <person name="Ishioka K."/>
            <person name="Shinagawa H."/>
        </authorList>
    </citation>
    <scope>NUCLEOTIDE SEQUENCE [GENOMIC DNA]</scope>
    <scope>FUNCTION</scope>
    <scope>PROBABLY NOT SOS REGULATED</scope>
    <source>
        <strain>ATCC 15692 / DSM 22644 / CIP 104116 / JCM 14847 / LMG 12228 / 1C / PRS 101 / PAO1</strain>
    </source>
</reference>
<reference key="2">
    <citation type="journal article" date="2000" name="Nature">
        <title>Complete genome sequence of Pseudomonas aeruginosa PAO1, an opportunistic pathogen.</title>
        <authorList>
            <person name="Stover C.K."/>
            <person name="Pham X.-Q.T."/>
            <person name="Erwin A.L."/>
            <person name="Mizoguchi S.D."/>
            <person name="Warrener P."/>
            <person name="Hickey M.J."/>
            <person name="Brinkman F.S.L."/>
            <person name="Hufnagle W.O."/>
            <person name="Kowalik D.J."/>
            <person name="Lagrou M."/>
            <person name="Garber R.L."/>
            <person name="Goltry L."/>
            <person name="Tolentino E."/>
            <person name="Westbrock-Wadman S."/>
            <person name="Yuan Y."/>
            <person name="Brody L.L."/>
            <person name="Coulter S.N."/>
            <person name="Folger K.R."/>
            <person name="Kas A."/>
            <person name="Larbig K."/>
            <person name="Lim R.M."/>
            <person name="Smith K.A."/>
            <person name="Spencer D.H."/>
            <person name="Wong G.K.-S."/>
            <person name="Wu Z."/>
            <person name="Paulsen I.T."/>
            <person name="Reizer J."/>
            <person name="Saier M.H. Jr."/>
            <person name="Hancock R.E.W."/>
            <person name="Lory S."/>
            <person name="Olson M.V."/>
        </authorList>
    </citation>
    <scope>NUCLEOTIDE SEQUENCE [LARGE SCALE GENOMIC DNA]</scope>
    <source>
        <strain>ATCC 15692 / DSM 22644 / CIP 104116 / JCM 14847 / LMG 12228 / 1C / PRS 101 / PAO1</strain>
    </source>
</reference>
<reference evidence="9" key="3">
    <citation type="journal article" date="2020" name="Biochem. Biophys. Res. Commun.">
        <title>Biochemical and structural characterization of the Holliday junction resolvase RuvC from Pseudomonas aeruginosa.</title>
        <authorList>
            <person name="Hu Y."/>
            <person name="He Y."/>
            <person name="Lin Z."/>
        </authorList>
    </citation>
    <scope>X-RAY CRYSTALLOGRAPHY (2.38 ANGSTROMS) OF 1-153</scope>
    <scope>FUNCTION</scope>
    <scope>CATALYTIC ACTIVITY</scope>
    <scope>PROBABLE ACTIVE SITE</scope>
    <scope>COFACTOR</scope>
    <scope>BIOPHYSICOCHEMICAL PROPERTIES</scope>
    <scope>SUBUNIT</scope>
    <scope>DNA-BINDING</scope>
    <scope>MUTAGENESIS OF ASP-8; ARG-12; ARG-35; ARG-44; ARG-50; GLU-67; PHE-70; ARG-73; ASN-74; ASP-139 AND ASP-142</scope>
</reference>
<comment type="function">
    <text evidence="2">The RuvA-RuvB-RuvC complex processes Holliday junction (HJ) DNA during genetic recombination and DNA repair. Endonuclease that resolves HJ intermediates. Cleaves cruciform DNA by making single-stranded nicks across the HJ at symmetrical positions within the homologous arms, yielding a 5'-phosphate and a 3'-hydroxyl group; requires a central core of homology in the junction. The consensus cleavage sequence is 5'-(A/T)TT(C/G)-3'. Cleavage occurs on the 3'-side of the TT dinucleotide at the point of strand exchange. HJ branch migration catalyzed by RuvA-RuvB allows RuvC to scan DNA until it finds its consensus sequence, where it cleaves and resolves the cruciform DNA.</text>
</comment>
<comment type="function">
    <text evidence="3 4">Complements an E.coli deletion mutant (PubMed:8982068). A C-terminally truncated protein (residues 1-153) binds cruciform but not linear dsDNA, the consensus cleavage sequence is 5'-TT|C-3' (PubMed:32085896).</text>
</comment>
<comment type="catalytic activity">
    <reaction evidence="2 3">
        <text>Endonucleolytic cleavage at a junction such as a reciprocal single-stranded crossover between two homologous DNA duplexes (Holliday junction).</text>
        <dbReference type="EC" id="3.1.21.10"/>
    </reaction>
</comment>
<comment type="cofactor">
    <text evidence="1 3">Mn(2+) is a poor substitute for Mg(2+) (PubMed:32085896). Binds 2 Mg(2+) ion per subunit.</text>
</comment>
<comment type="cofactor">
    <cofactor evidence="2 3">
        <name>Mg(2+)</name>
        <dbReference type="ChEBI" id="CHEBI:18420"/>
    </cofactor>
    <text evidence="2 3">Binds 2 Mg(2+) ion per subunit (By similarity). Mn(2+) is a poor substitute for Mg(2+) (PubMed:32085896).</text>
</comment>
<comment type="biophysicochemical properties">
    <phDependence>
        <text evidence="3">Optimum pH is 8.0 to 9.0.</text>
    </phDependence>
    <temperatureDependence>
        <text evidence="3">Optimum temperature is 37-55 degrees Celsius.</text>
    </temperatureDependence>
</comment>
<comment type="subunit">
    <text evidence="2 3">Homodimer (PubMed:32085896). Binds Holliday junction (HJ) DNA. The HJ becomes 2-fold symmetrical on binding to RuvC with unstacked arms; it has a different conformation from HJ DNA in complex with RuvA. In the full resolvosome a probable DNA-RuvA(4)-RuvB(12)-RuvC(2) complex forms which resolves the HJ.</text>
</comment>
<comment type="subcellular location">
    <subcellularLocation>
        <location evidence="2">Cytoplasm</location>
    </subcellularLocation>
</comment>
<comment type="miscellaneous">
    <text evidence="4">Probably part of a ruvC-ruvA-ruvB operon. Does not seem to belong to the SOS regulon, no LexA binding site has been identified in the promoter region.</text>
</comment>
<comment type="similarity">
    <text evidence="2 7">Belongs to the RuvC family.</text>
</comment>